<reference key="1">
    <citation type="journal article" date="2006" name="Appl. Environ. Microbiol.">
        <title>Identification of an abscisic acid gene cluster in the grey mold Botrytis cinerea.</title>
        <authorList>
            <person name="Siewers V."/>
            <person name="Kokkelink L."/>
            <person name="Smedsgaard J."/>
            <person name="Tudzynski P."/>
        </authorList>
    </citation>
    <scope>NUCLEOTIDE SEQUENCE [GENOMIC DNA]</scope>
    <scope>INDUCTION</scope>
    <scope>FUNCTION</scope>
    <scope>DISRUPTION PHENOTYPE</scope>
    <scope>PATHWAY</scope>
    <source>
        <strain>SAS56</strain>
    </source>
</reference>
<reference key="2">
    <citation type="journal article" date="2004" name="Appl. Environ. Microbiol.">
        <title>The P450 monooxygenase BcABA1 is essential for abscisic acid biosynthesis in Botrytis cinerea.</title>
        <authorList>
            <person name="Siewers V."/>
            <person name="Smedsgaard J."/>
            <person name="Tudzynski P."/>
        </authorList>
    </citation>
    <scope>FUNCTION</scope>
</reference>
<reference key="3">
    <citation type="journal article" date="2018" name="J. Am. Chem. Soc.">
        <title>Unveiling biosynthesis of the phytohormone abscisic acid in fungi: unprecedented mechanism of core scaffold formation catalyzed by an unusual sesquiterpene synthase.</title>
        <authorList>
            <person name="Takino J."/>
            <person name="Kozaki T."/>
            <person name="Sato Y."/>
            <person name="Liu C."/>
            <person name="Ozaki T."/>
            <person name="Minami A."/>
            <person name="Oikawa H."/>
        </authorList>
    </citation>
    <scope>FUNCTION</scope>
</reference>
<proteinExistence type="evidence at transcript level"/>
<evidence type="ECO:0000250" key="1">
    <source>
        <dbReference type="UniProtKB" id="P04798"/>
    </source>
</evidence>
<evidence type="ECO:0000255" key="2"/>
<evidence type="ECO:0000255" key="3">
    <source>
        <dbReference type="PROSITE-ProRule" id="PRU00498"/>
    </source>
</evidence>
<evidence type="ECO:0000269" key="4">
    <source>
    </source>
</evidence>
<evidence type="ECO:0000269" key="5">
    <source>
    </source>
</evidence>
<evidence type="ECO:0000269" key="6">
    <source>
    </source>
</evidence>
<evidence type="ECO:0000303" key="7">
    <source>
    </source>
</evidence>
<evidence type="ECO:0000305" key="8"/>
<evidence type="ECO:0000305" key="9">
    <source>
    </source>
</evidence>
<accession>Q5K0D9</accession>
<organism>
    <name type="scientific">Botryotinia fuckeliana</name>
    <name type="common">Noble rot fungus</name>
    <name type="synonym">Botrytis cinerea</name>
    <dbReference type="NCBI Taxonomy" id="40559"/>
    <lineage>
        <taxon>Eukaryota</taxon>
        <taxon>Fungi</taxon>
        <taxon>Dikarya</taxon>
        <taxon>Ascomycota</taxon>
        <taxon>Pezizomycotina</taxon>
        <taxon>Leotiomycetes</taxon>
        <taxon>Helotiales</taxon>
        <taxon>Sclerotiniaceae</taxon>
        <taxon>Botrytis</taxon>
    </lineage>
</organism>
<name>ABA2_BOTFU</name>
<sequence length="527" mass="59910">MLLSIKDLSEKYIMLLDVKDLSTLKTTVAVLVTVALIAQVLWKIFFHPLSAFPGPWFNRISEIPGSWVIATGKQHSYYRKLHEKYGPVVRVAPNELSFIGDRAWDDIYGVQKKGPNFEKSPIFIGAVSPLDGQTGISLAPNEAHTRQRRALAHVFSNTALLQQEEIMRSHVDKLVGQLKKTIAENRPINFSNWYTYTTFDMMGDLCFAEPFGCLDQGGATEWSTSVINVFKSAAWDQSIRRVAGVNTWLQKLMVKLLIPSKAANWRKVHFQNSREKTLRRLADGNREHKDFIYHILKNKEAKNSLSETEIILNMVLLISAGTETTASLLTGWTYFICTHPEVYKRLTDEIRGRFNSEQDITWETVKDLPYLHATLSEALRLYSPAPANQQRIVPPGGSVIDGHFVPGKTTVAVAPWAAINSSLNFKDPQKFIPERWLGDERFVNDKLNASQPFSLGPRGCIGKNLSFFEMRLITSRLLWNFDVSLVTTGEHGETNKLWDMDGAGKYMKVYQTWNKPDMWVMLKEVPR</sequence>
<dbReference type="EC" id="1.-.-.-" evidence="9"/>
<dbReference type="EMBL" id="AJ851088">
    <property type="protein sequence ID" value="CAH64679.1"/>
    <property type="molecule type" value="Genomic_DNA"/>
</dbReference>
<dbReference type="SMR" id="Q5K0D9"/>
<dbReference type="GlyCosmos" id="Q5K0D9">
    <property type="glycosylation" value="4 sites, No reported glycans"/>
</dbReference>
<dbReference type="GO" id="GO:0016020">
    <property type="term" value="C:membrane"/>
    <property type="evidence" value="ECO:0007669"/>
    <property type="project" value="UniProtKB-SubCell"/>
</dbReference>
<dbReference type="GO" id="GO:0020037">
    <property type="term" value="F:heme binding"/>
    <property type="evidence" value="ECO:0007669"/>
    <property type="project" value="InterPro"/>
</dbReference>
<dbReference type="GO" id="GO:0005506">
    <property type="term" value="F:iron ion binding"/>
    <property type="evidence" value="ECO:0007669"/>
    <property type="project" value="InterPro"/>
</dbReference>
<dbReference type="GO" id="GO:0004497">
    <property type="term" value="F:monooxygenase activity"/>
    <property type="evidence" value="ECO:0007669"/>
    <property type="project" value="UniProtKB-KW"/>
</dbReference>
<dbReference type="GO" id="GO:0016705">
    <property type="term" value="F:oxidoreductase activity, acting on paired donors, with incorporation or reduction of molecular oxygen"/>
    <property type="evidence" value="ECO:0007669"/>
    <property type="project" value="InterPro"/>
</dbReference>
<dbReference type="GO" id="GO:0009688">
    <property type="term" value="P:abscisic acid biosynthetic process"/>
    <property type="evidence" value="ECO:0000315"/>
    <property type="project" value="GO_Central"/>
</dbReference>
<dbReference type="CDD" id="cd11058">
    <property type="entry name" value="CYP60B-like"/>
    <property type="match status" value="1"/>
</dbReference>
<dbReference type="Gene3D" id="1.10.630.10">
    <property type="entry name" value="Cytochrome P450"/>
    <property type="match status" value="1"/>
</dbReference>
<dbReference type="InterPro" id="IPR001128">
    <property type="entry name" value="Cyt_P450"/>
</dbReference>
<dbReference type="InterPro" id="IPR017972">
    <property type="entry name" value="Cyt_P450_CS"/>
</dbReference>
<dbReference type="InterPro" id="IPR002401">
    <property type="entry name" value="Cyt_P450_E_grp-I"/>
</dbReference>
<dbReference type="InterPro" id="IPR036396">
    <property type="entry name" value="Cyt_P450_sf"/>
</dbReference>
<dbReference type="InterPro" id="IPR050121">
    <property type="entry name" value="Cytochrome_P450_monoxygenase"/>
</dbReference>
<dbReference type="PANTHER" id="PTHR24305">
    <property type="entry name" value="CYTOCHROME P450"/>
    <property type="match status" value="1"/>
</dbReference>
<dbReference type="PANTHER" id="PTHR24305:SF210">
    <property type="entry name" value="CYTOCHROME P450 MONOOXYGENASE ASQL-RELATED"/>
    <property type="match status" value="1"/>
</dbReference>
<dbReference type="Pfam" id="PF00067">
    <property type="entry name" value="p450"/>
    <property type="match status" value="1"/>
</dbReference>
<dbReference type="PRINTS" id="PR00463">
    <property type="entry name" value="EP450I"/>
</dbReference>
<dbReference type="PRINTS" id="PR00385">
    <property type="entry name" value="P450"/>
</dbReference>
<dbReference type="SUPFAM" id="SSF48264">
    <property type="entry name" value="Cytochrome P450"/>
    <property type="match status" value="1"/>
</dbReference>
<dbReference type="PROSITE" id="PS00086">
    <property type="entry name" value="CYTOCHROME_P450"/>
    <property type="match status" value="1"/>
</dbReference>
<protein>
    <recommendedName>
        <fullName evidence="7">Cytochrome P450 monooxygenase abl2</fullName>
        <ecNumber evidence="9">1.-.-.-</ecNumber>
    </recommendedName>
    <alternativeName>
        <fullName evidence="7">Abscisic acid biosynthesis cluster protein 2</fullName>
    </alternativeName>
</protein>
<comment type="function">
    <text evidence="4 5 6 9">Cytochrome P450 monooxygenase; part of the gene cluster that mediates the biosynthesis of abscisic acid (ABA), a phytohormone that acts antagonistically toward salicylic acid (SA), jasmonic acid (JA) and ethylene (ETH) signaling, to impede plant defense responses (PubMed:15240257, PubMed:16820452). The first step of the pathway catalyzes the reaction from farnesyl diphosphate to alpha-ionylideneethane performed by the alpha-ionylideneethane synthase aba3 via a three-step reaction mechanism involving 2 neutral intermediates, beta-farnesene and allofarnesene (PubMed:30226766). The cytochrome P450 monooxygenase aba1 might then be involved in the conversion of alpha-ionylideneethane to alpha-ionylideneacetic acid (Probable). Alpha-ionylideneacetic acid is further converted to abscisic acid in 2 steps involving the cytochrome P450 monooxygenase aba2 and the short-chain dehydrogenase/reductase aba4, via the intermediates 1'-deoxy-ABA or 1',4'-trans-diol-ABA, depending on the order of action of these 2 enzymes (Probable). Aba2 is responsible for the hydroxylation of carbon atom C-1' and aba4 might be involved in the oxidation of the C-4' carbon atom (PubMed:16820452).</text>
</comment>
<comment type="cofactor">
    <cofactor evidence="1">
        <name>heme</name>
        <dbReference type="ChEBI" id="CHEBI:30413"/>
    </cofactor>
</comment>
<comment type="pathway">
    <text evidence="5">Hormone biosynthesis.</text>
</comment>
<comment type="subcellular location">
    <subcellularLocation>
        <location evidence="2">Membrane</location>
        <topology evidence="2">Single-pass membrane protein</topology>
    </subcellularLocation>
</comment>
<comment type="induction">
    <text evidence="5">Expression is persistently induced 60 minutes after the addition of the ABA precursor mevalonic acid (MVA) to the medium.</text>
</comment>
<comment type="disruption phenotype">
    <text evidence="5">Impairs the production of abscisic acid (ABA) and leads to the accumulation of 1'-deoxy-ABA.</text>
</comment>
<comment type="similarity">
    <text evidence="8">Belongs to the cytochrome P450 family.</text>
</comment>
<gene>
    <name type="primary">aba2</name>
</gene>
<keyword id="KW-0325">Glycoprotein</keyword>
<keyword id="KW-0349">Heme</keyword>
<keyword id="KW-0408">Iron</keyword>
<keyword id="KW-0472">Membrane</keyword>
<keyword id="KW-0479">Metal-binding</keyword>
<keyword id="KW-0503">Monooxygenase</keyword>
<keyword id="KW-0560">Oxidoreductase</keyword>
<keyword id="KW-0812">Transmembrane</keyword>
<keyword id="KW-1133">Transmembrane helix</keyword>
<keyword id="KW-0843">Virulence</keyword>
<feature type="chain" id="PRO_0000448415" description="Cytochrome P450 monooxygenase abl2">
    <location>
        <begin position="1"/>
        <end position="527"/>
    </location>
</feature>
<feature type="transmembrane region" description="Helical" evidence="2">
    <location>
        <begin position="26"/>
        <end position="46"/>
    </location>
</feature>
<feature type="binding site" description="axial binding residue" evidence="1">
    <location>
        <position position="460"/>
    </location>
    <ligand>
        <name>heme</name>
        <dbReference type="ChEBI" id="CHEBI:30413"/>
    </ligand>
    <ligandPart>
        <name>Fe</name>
        <dbReference type="ChEBI" id="CHEBI:18248"/>
    </ligandPart>
</feature>
<feature type="glycosylation site" description="N-linked (GlcNAc...) asparagine" evidence="3">
    <location>
        <position position="189"/>
    </location>
</feature>
<feature type="glycosylation site" description="N-linked (GlcNAc...) asparagine" evidence="3">
    <location>
        <position position="420"/>
    </location>
</feature>
<feature type="glycosylation site" description="N-linked (GlcNAc...) asparagine" evidence="3">
    <location>
        <position position="448"/>
    </location>
</feature>
<feature type="glycosylation site" description="N-linked (GlcNAc...) asparagine" evidence="3">
    <location>
        <position position="464"/>
    </location>
</feature>